<protein>
    <recommendedName>
        <fullName>Peroxiredoxin-2</fullName>
        <ecNumber evidence="1">1.11.1.24</ecNumber>
    </recommendedName>
    <alternativeName>
        <fullName>Thiol-specific antioxidant protein</fullName>
        <shortName>TSA</shortName>
    </alternativeName>
    <alternativeName>
        <fullName>Thioredoxin peroxidase 1</fullName>
    </alternativeName>
    <alternativeName>
        <fullName>Thioredoxin-dependent peroxide reductase 1</fullName>
    </alternativeName>
    <alternativeName>
        <fullName evidence="4">Thioredoxin-dependent peroxiredoxin 2</fullName>
    </alternativeName>
</protein>
<proteinExistence type="evidence at transcript level"/>
<name>PRDX2_PIG</name>
<evidence type="ECO:0000250" key="1">
    <source>
        <dbReference type="UniProtKB" id="P32119"/>
    </source>
</evidence>
<evidence type="ECO:0000250" key="2">
    <source>
        <dbReference type="UniProtKB" id="Q06830"/>
    </source>
</evidence>
<evidence type="ECO:0000255" key="3">
    <source>
        <dbReference type="PROSITE-ProRule" id="PRU00691"/>
    </source>
</evidence>
<evidence type="ECO:0000305" key="4"/>
<reference key="1">
    <citation type="journal article" date="1996" name="Mamm. Genome">
        <title>Evaluation and characterization of a porcine small intestine cDNA library: analysis of 839 clones.</title>
        <authorList>
            <person name="Winteroe A.K."/>
            <person name="Fredholm M."/>
            <person name="Davies W."/>
        </authorList>
    </citation>
    <scope>NUCLEOTIDE SEQUENCE [LARGE SCALE MRNA]</scope>
    <source>
        <tissue>Small intestine</tissue>
    </source>
</reference>
<keyword id="KW-0049">Antioxidant</keyword>
<keyword id="KW-0963">Cytoplasm</keyword>
<keyword id="KW-1015">Disulfide bond</keyword>
<keyword id="KW-0560">Oxidoreductase</keyword>
<keyword id="KW-0575">Peroxidase</keyword>
<keyword id="KW-0597">Phosphoprotein</keyword>
<keyword id="KW-0676">Redox-active center</keyword>
<keyword id="KW-1185">Reference proteome</keyword>
<gene>
    <name type="primary">PRDX2</name>
    <name type="synonym">TDPX1</name>
</gene>
<comment type="function">
    <text evidence="1">Thiol-specific peroxidase that catalyzes the reduction of hydrogen peroxide and organic hydroperoxides to water and alcohols, respectively. Plays a role in cell protection against oxidative stress by detoxifying peroxides and as sensor of hydrogen peroxide-mediated signaling events. Might participate in the signaling cascades of growth factors and tumor necrosis factor-alpha by regulating the intracellular concentrations of H(2)O(2).</text>
</comment>
<comment type="catalytic activity">
    <reaction evidence="1">
        <text>a hydroperoxide + [thioredoxin]-dithiol = an alcohol + [thioredoxin]-disulfide + H2O</text>
        <dbReference type="Rhea" id="RHEA:62620"/>
        <dbReference type="Rhea" id="RHEA-COMP:10698"/>
        <dbReference type="Rhea" id="RHEA-COMP:10700"/>
        <dbReference type="ChEBI" id="CHEBI:15377"/>
        <dbReference type="ChEBI" id="CHEBI:29950"/>
        <dbReference type="ChEBI" id="CHEBI:30879"/>
        <dbReference type="ChEBI" id="CHEBI:35924"/>
        <dbReference type="ChEBI" id="CHEBI:50058"/>
        <dbReference type="EC" id="1.11.1.24"/>
    </reaction>
</comment>
<comment type="subunit">
    <text evidence="1">Homodimer; disulfide-linked, upon oxidation. 5 homodimers assemble to form a ring-like decamer. Interacts with TIPIN.</text>
</comment>
<comment type="subcellular location">
    <subcellularLocation>
        <location evidence="1">Cytoplasm</location>
    </subcellularLocation>
</comment>
<comment type="PTM">
    <text evidence="1 2">The enzyme can be inactivated by further oxidation of the cysteine sulfenic acid (C(P)-SOH) to sulphinic acid (C(P)-SO2H) instead of its condensation to a disulfide bond. It can be reactivated by forming a transient disulfide bond with sulfiredoxin SRXN1, which reduces the cysteine sulfinic acid in an ATP- and Mg-dependent manner.</text>
</comment>
<comment type="PTM">
    <text evidence="1">Acetylation increases resistance to transition to high molecular-mass complexes. Deacetylated by HDAC6 which decreases reducing activity.</text>
</comment>
<comment type="miscellaneous">
    <text evidence="1">The active site is a conserved redox-active cysteine residue, the peroxidatic cysteine (C(P)), which makes the nucleophilic attack on the peroxide substrate. The peroxide oxidizes the C(P)-SH to cysteine sulfenic acid (C(P)-SOH), which then reacts with another cysteine residue, the resolving cysteine (C(R)), to form a disulfide bridge. The disulfide is subsequently reduced by an appropriate electron donor to complete the catalytic cycle. In this typical 2-Cys peroxiredoxin, C(R) is provided by the other dimeric subunit to form an intersubunit disulfide. The disulfide is subsequently reduced by thioredoxin.</text>
</comment>
<comment type="similarity">
    <text evidence="4">Belongs to the peroxiredoxin family. AhpC/Prx1 subfamily.</text>
</comment>
<sequence>LFFYPLDFTFVCPTEIIAFSDRAEEFHQLGCEVLGVSVDXQXTHLAWINTPRKEGGLGPLKIPLLADVTRNLSLDYGVLKEDEGIAYRGLFIIDGKGVLRQITVNDLPVGRXVDEALRLVQGXQYTD</sequence>
<feature type="chain" id="PRO_0000135082" description="Peroxiredoxin-2">
    <location>
        <begin position="1" status="less than"/>
        <end position="127" status="greater than"/>
    </location>
</feature>
<feature type="domain" description="Thioredoxin" evidence="3">
    <location>
        <begin position="1" status="less than"/>
        <end position="125"/>
    </location>
</feature>
<feature type="active site" description="Cysteine sulfenic acid (-SOH) intermediate" evidence="1">
    <location>
        <position position="12"/>
    </location>
</feature>
<feature type="modified residue" description="Phosphoserine" evidence="1">
    <location>
        <position position="73"/>
    </location>
</feature>
<feature type="disulfide bond" description="Interchain (with C-?); in linked form" evidence="1">
    <location>
        <position position="12"/>
    </location>
</feature>
<feature type="non-terminal residue">
    <location>
        <position position="1"/>
    </location>
</feature>
<feature type="non-terminal residue">
    <location>
        <position position="127"/>
    </location>
</feature>
<organism>
    <name type="scientific">Sus scrofa</name>
    <name type="common">Pig</name>
    <dbReference type="NCBI Taxonomy" id="9823"/>
    <lineage>
        <taxon>Eukaryota</taxon>
        <taxon>Metazoa</taxon>
        <taxon>Chordata</taxon>
        <taxon>Craniata</taxon>
        <taxon>Vertebrata</taxon>
        <taxon>Euteleostomi</taxon>
        <taxon>Mammalia</taxon>
        <taxon>Eutheria</taxon>
        <taxon>Laurasiatheria</taxon>
        <taxon>Artiodactyla</taxon>
        <taxon>Suina</taxon>
        <taxon>Suidae</taxon>
        <taxon>Sus</taxon>
    </lineage>
</organism>
<dbReference type="EC" id="1.11.1.24" evidence="1"/>
<dbReference type="EMBL" id="F14561">
    <property type="protein sequence ID" value="CAA23125.1"/>
    <property type="molecule type" value="mRNA"/>
</dbReference>
<dbReference type="STRING" id="9823.ENSSSCP00000039283"/>
<dbReference type="PaxDb" id="9823-ENSSSCP00000014605"/>
<dbReference type="PeptideAtlas" id="P52552"/>
<dbReference type="eggNOG" id="KOG0852">
    <property type="taxonomic scope" value="Eukaryota"/>
</dbReference>
<dbReference type="InParanoid" id="P52552"/>
<dbReference type="Proteomes" id="UP000008227">
    <property type="component" value="Unplaced"/>
</dbReference>
<dbReference type="Proteomes" id="UP000314985">
    <property type="component" value="Unplaced"/>
</dbReference>
<dbReference type="Proteomes" id="UP000694570">
    <property type="component" value="Unplaced"/>
</dbReference>
<dbReference type="Proteomes" id="UP000694571">
    <property type="component" value="Unplaced"/>
</dbReference>
<dbReference type="Proteomes" id="UP000694720">
    <property type="component" value="Unplaced"/>
</dbReference>
<dbReference type="Proteomes" id="UP000694722">
    <property type="component" value="Unplaced"/>
</dbReference>
<dbReference type="Proteomes" id="UP000694723">
    <property type="component" value="Unplaced"/>
</dbReference>
<dbReference type="Proteomes" id="UP000694724">
    <property type="component" value="Unplaced"/>
</dbReference>
<dbReference type="Proteomes" id="UP000694725">
    <property type="component" value="Unplaced"/>
</dbReference>
<dbReference type="Proteomes" id="UP000694726">
    <property type="component" value="Unplaced"/>
</dbReference>
<dbReference type="Proteomes" id="UP000694727">
    <property type="component" value="Unplaced"/>
</dbReference>
<dbReference type="Proteomes" id="UP000694728">
    <property type="component" value="Unplaced"/>
</dbReference>
<dbReference type="GO" id="GO:0005829">
    <property type="term" value="C:cytosol"/>
    <property type="evidence" value="ECO:0000318"/>
    <property type="project" value="GO_Central"/>
</dbReference>
<dbReference type="GO" id="GO:0008379">
    <property type="term" value="F:thioredoxin peroxidase activity"/>
    <property type="evidence" value="ECO:0000318"/>
    <property type="project" value="GO_Central"/>
</dbReference>
<dbReference type="GO" id="GO:0045454">
    <property type="term" value="P:cell redox homeostasis"/>
    <property type="evidence" value="ECO:0000318"/>
    <property type="project" value="GO_Central"/>
</dbReference>
<dbReference type="GO" id="GO:0042744">
    <property type="term" value="P:hydrogen peroxide catabolic process"/>
    <property type="evidence" value="ECO:0000318"/>
    <property type="project" value="GO_Central"/>
</dbReference>
<dbReference type="GO" id="GO:0045321">
    <property type="term" value="P:leukocyte activation"/>
    <property type="evidence" value="ECO:0000318"/>
    <property type="project" value="GO_Central"/>
</dbReference>
<dbReference type="GO" id="GO:0019430">
    <property type="term" value="P:removal of superoxide radicals"/>
    <property type="evidence" value="ECO:0000318"/>
    <property type="project" value="GO_Central"/>
</dbReference>
<dbReference type="GO" id="GO:0006979">
    <property type="term" value="P:response to oxidative stress"/>
    <property type="evidence" value="ECO:0000318"/>
    <property type="project" value="GO_Central"/>
</dbReference>
<dbReference type="CDD" id="cd03015">
    <property type="entry name" value="PRX_Typ2cys"/>
    <property type="match status" value="1"/>
</dbReference>
<dbReference type="Gene3D" id="3.40.30.10">
    <property type="entry name" value="Glutaredoxin"/>
    <property type="match status" value="1"/>
</dbReference>
<dbReference type="InterPro" id="IPR000866">
    <property type="entry name" value="AhpC/TSA"/>
</dbReference>
<dbReference type="InterPro" id="IPR050217">
    <property type="entry name" value="Peroxiredoxin"/>
</dbReference>
<dbReference type="InterPro" id="IPR036249">
    <property type="entry name" value="Thioredoxin-like_sf"/>
</dbReference>
<dbReference type="InterPro" id="IPR013766">
    <property type="entry name" value="Thioredoxin_domain"/>
</dbReference>
<dbReference type="PANTHER" id="PTHR10681:SF161">
    <property type="entry name" value="PEROXIREDOXIN-2"/>
    <property type="match status" value="1"/>
</dbReference>
<dbReference type="PANTHER" id="PTHR10681">
    <property type="entry name" value="THIOREDOXIN PEROXIDASE"/>
    <property type="match status" value="1"/>
</dbReference>
<dbReference type="Pfam" id="PF00578">
    <property type="entry name" value="AhpC-TSA"/>
    <property type="match status" value="1"/>
</dbReference>
<dbReference type="SUPFAM" id="SSF52833">
    <property type="entry name" value="Thioredoxin-like"/>
    <property type="match status" value="1"/>
</dbReference>
<dbReference type="PROSITE" id="PS51352">
    <property type="entry name" value="THIOREDOXIN_2"/>
    <property type="match status" value="1"/>
</dbReference>
<accession>P52552</accession>